<protein>
    <recommendedName>
        <fullName>Tyrosine-protein phosphatase non-receptor type 23</fullName>
        <ecNumber>3.1.3.48</ecNumber>
    </recommendedName>
</protein>
<sequence length="1692" mass="185216">MEAVPRMPMIWLDLKEAGDFHFQSAVKKFVLKNYGENPEAYNEELKKLELLRQNAIRVARDFEGCSVLRKYLGQLHYLQSRVPMGSGQEAAVAVTWTEIFSGKSVSHEDIKYEQACILYNLGALHSMLGAMDKRVSEEGMKVSCTHFQCAAGAFAYLREHFPQAFSVDMSRQILTLNVNLMLGQAQECLLEKSMLDNRKSFLVARISAQVVDYYKEACRALENPDTASLLGRIQKDWKKLVQMKIYYFAAVAHLHMGKQAEEQQKFGERVAYFQSALDKLNEAIKLAKGQPDTVQDALRFAMDVIGGKYNSAKKDNDFIYHEAVPALDTLQPVKGAPLVKPLPVNPTDPAVTGPDIFAKLVPMAAHEASSLYSEEKAKLLREMLAKIEDKNEVLDQFMDSMQLDPETVDNLDAYNHIPPQLMEKCAALSVRPDTVKNLVQSMQVLSGVFTDVEASLKDIRDLLEEDELQEQKLQETLGQAGAGPGPSVAKAELAEVRREWAKYMEVHEKASFTNSELHRAMNLHVGNLRLLSGPLDQVRAALPTPALTPEDKAVLQNLKRILAKVQEMRDQRVSLEQQLRELIQKDDITASLVTTDHSEMKKLFEEQLKKYDQLKVYLEQNLAAQDNVLRALTEANVQYAAVRRVLSELDQKWNSTLQTLVASYEAYEDLMKKSQEGKDFYADLESKVATLLERAQSICRAQEAARQQLLDRELKKKAPPPRPTAPKPLLSRREEGEAVEAGDTPEELRSLPPDMMVGPRLPDPFLGTTAPLHFSPGPFPSSTGPATHYLSGPLPPGTYSGPTQLMQPRAAVPMAPATVLYPAPAYTSELGLVPRSSPQHGIVSSPYAGVGPPQPVVGLPSAPPPQLSGPELAMTVRPATTTVDSVQAPISSHTAPRPNPTPALPQPCFPVPQPVPQSVPQPQPLPVPYTYSIGTKQPLPAPYTYSIGTKQHLTGPLPQHQFPPGIPTGFPVPRTGPQAQAQPQPQPQPQPQPQPQPQPQPQPQSQSQPQPQPQPQPQRPAFGPQPTQQPLPFQHPHLFPSQAPGILPPPPPTPYHFTPQPGVLGQPPPTLHTQLYPGPSQDPLPPHSGALPFPSPGPPHPHPTLAYGPAPSPRPLGPQATPVSIRGPPPASQPTPSPHLVPSPAPSPGPGPVPSRPPTAEPPPCLRRGAAAADLLSSSPESQHGGTQPPGGGQPLLQPTKVDAAEGRRPQALRLIEQDPYEHPERLQQLQQELEAFRGQLGDAGALDAIWRELQEAQEHDARGRSIAIARCYSLKNRHQDVMPYDSNRVVLRSGKDDYINASCVEGLSPYCPPLVATQAPLPGTAADFWLMVHEQKVSVIVMLVSEAEMEKQKVARYFPTERGQPMVHGALSVALSSIRTTETHVERVLSLQFRDQSLKRSLVHLHFPTWPELGLPDSPGNLLRFIQEVHAHYLHQRPLHTPIVVHCSSGVGRTGAFALLYAAVQEVEAGNGIPELPQLVRRMRQQRKHMLQEKLHLKFCHEALVRHVEQVLQRHGVPPPGKPVASVNISQKNHLPQDSQDLVLGGDVPISSIQATIAKLSIRPLGGLDSPAASLPGLVEPPGLPPASLPESTPVPSSSPPPLSSPLPEAPQPEEEPSVPEAPSLGPPSSSLELLASLTPEAFSLDSSLRGKQRMSKQNFLQAHNGQGLRAAQPTDDPLSLLDPLWTLNKT</sequence>
<name>PTN23_MOUSE</name>
<comment type="function">
    <text evidence="1">Plays a role in sorting of endocytic ubiquitinated cargos into multivesicular bodies (MVBs) via its interaction with the ESCRT-I complex (endosomal sorting complex required for transport I), and possibly also other ESCRT complexes. May act as a negative regulator of Ras-mediated mitogenic activity. Plays a role in ciliogenesis (By similarity).</text>
</comment>
<comment type="catalytic activity">
    <reaction evidence="6">
        <text>O-phospho-L-tyrosyl-[protein] + H2O = L-tyrosyl-[protein] + phosphate</text>
        <dbReference type="Rhea" id="RHEA:10684"/>
        <dbReference type="Rhea" id="RHEA-COMP:10136"/>
        <dbReference type="Rhea" id="RHEA-COMP:20101"/>
        <dbReference type="ChEBI" id="CHEBI:15377"/>
        <dbReference type="ChEBI" id="CHEBI:43474"/>
        <dbReference type="ChEBI" id="CHEBI:46858"/>
        <dbReference type="ChEBI" id="CHEBI:61978"/>
        <dbReference type="EC" id="3.1.3.48"/>
    </reaction>
</comment>
<comment type="subunit">
    <text evidence="1">Interacts with GRAP2 and GRB2. Interacts with UBAP1 and CHMP4B (By similarity).</text>
</comment>
<comment type="interaction">
    <interactant intactId="EBI-4284816">
        <id>Q6PB44</id>
    </interactant>
    <interactant intactId="EBI-11569902">
        <id>Q8BR07</id>
        <label>Bicd1</label>
    </interactant>
    <organismsDiffer>false</organismsDiffer>
    <experiments>7</experiments>
</comment>
<comment type="interaction">
    <interactant intactId="EBI-4284816">
        <id>Q6PB44</id>
    </interactant>
    <interactant intactId="EBI-642151">
        <id>O89100</id>
        <label>Grap2</label>
    </interactant>
    <organismsDiffer>false</organismsDiffer>
    <experiments>3</experiments>
</comment>
<comment type="subcellular location">
    <subcellularLocation>
        <location evidence="1">Nucleus</location>
    </subcellularLocation>
    <subcellularLocation>
        <location evidence="1">Cytoplasm</location>
    </subcellularLocation>
    <subcellularLocation>
        <location evidence="1">Cytoplasmic vesicle</location>
    </subcellularLocation>
    <subcellularLocation>
        <location evidence="1">Endosome</location>
    </subcellularLocation>
    <subcellularLocation>
        <location evidence="1">Cytoplasm</location>
        <location evidence="1">Cytoskeleton</location>
        <location evidence="1">Cilium basal body</location>
    </subcellularLocation>
</comment>
<comment type="alternative products">
    <event type="alternative splicing"/>
    <isoform>
        <id>Q6PB44-1</id>
        <name>1</name>
        <sequence type="displayed"/>
    </isoform>
    <isoform>
        <id>Q6PB44-2</id>
        <name>2</name>
        <sequence type="described" ref="VSP_014195"/>
    </isoform>
</comment>
<comment type="similarity">
    <text evidence="9">Belongs to the protein-tyrosine phosphatase family. Non-receptor class subfamily.</text>
</comment>
<comment type="sequence caution" evidence="9">
    <conflict type="erroneous initiation">
        <sequence resource="EMBL-CDS" id="BAD32456"/>
    </conflict>
</comment>
<accession>Q6PB44</accession>
<accession>Q69ZJ0</accession>
<accession>Q8R1Z5</accession>
<accession>Q923E6</accession>
<keyword id="KW-0002">3D-structure</keyword>
<keyword id="KW-0025">Alternative splicing</keyword>
<keyword id="KW-0966">Cell projection</keyword>
<keyword id="KW-0969">Cilium</keyword>
<keyword id="KW-0970">Cilium biogenesis/degradation</keyword>
<keyword id="KW-0175">Coiled coil</keyword>
<keyword id="KW-0963">Cytoplasm</keyword>
<keyword id="KW-0968">Cytoplasmic vesicle</keyword>
<keyword id="KW-0206">Cytoskeleton</keyword>
<keyword id="KW-0967">Endosome</keyword>
<keyword id="KW-0378">Hydrolase</keyword>
<keyword id="KW-0488">Methylation</keyword>
<keyword id="KW-0539">Nucleus</keyword>
<keyword id="KW-0597">Phosphoprotein</keyword>
<keyword id="KW-0904">Protein phosphatase</keyword>
<keyword id="KW-0653">Protein transport</keyword>
<keyword id="KW-1185">Reference proteome</keyword>
<keyword id="KW-0677">Repeat</keyword>
<keyword id="KW-0802">TPR repeat</keyword>
<keyword id="KW-0813">Transport</keyword>
<feature type="chain" id="PRO_0000094778" description="Tyrosine-protein phosphatase non-receptor type 23">
    <location>
        <begin position="1"/>
        <end position="1692"/>
    </location>
</feature>
<feature type="domain" description="BRO1" evidence="5">
    <location>
        <begin position="8"/>
        <end position="394"/>
    </location>
</feature>
<feature type="repeat" description="TPR 1">
    <location>
        <begin position="250"/>
        <end position="283"/>
    </location>
</feature>
<feature type="repeat" description="TPR 2">
    <location>
        <begin position="374"/>
        <end position="407"/>
    </location>
</feature>
<feature type="repeat" description="1">
    <location>
        <begin position="977"/>
        <end position="978"/>
    </location>
</feature>
<feature type="repeat" description="2">
    <location>
        <begin position="979"/>
        <end position="980"/>
    </location>
</feature>
<feature type="repeat" description="3">
    <location>
        <begin position="981"/>
        <end position="982"/>
    </location>
</feature>
<feature type="repeat" description="4">
    <location>
        <begin position="983"/>
        <end position="984"/>
    </location>
</feature>
<feature type="repeat" description="5">
    <location>
        <begin position="985"/>
        <end position="986"/>
    </location>
</feature>
<feature type="repeat" description="6">
    <location>
        <begin position="987"/>
        <end position="988"/>
    </location>
</feature>
<feature type="repeat" description="7">
    <location>
        <begin position="989"/>
        <end position="990"/>
    </location>
</feature>
<feature type="repeat" description="8">
    <location>
        <begin position="991"/>
        <end position="992"/>
    </location>
</feature>
<feature type="repeat" description="9">
    <location>
        <begin position="993"/>
        <end position="994"/>
    </location>
</feature>
<feature type="repeat" description="10">
    <location>
        <begin position="995"/>
        <end position="996"/>
    </location>
</feature>
<feature type="repeat" description="11">
    <location>
        <begin position="997"/>
        <end position="998"/>
    </location>
</feature>
<feature type="repeat" description="12">
    <location>
        <begin position="999"/>
        <end position="1000"/>
    </location>
</feature>
<feature type="repeat" description="13">
    <location>
        <begin position="1001"/>
        <end position="1002"/>
    </location>
</feature>
<feature type="repeat" description="14">
    <location>
        <begin position="1003"/>
        <end position="1004"/>
    </location>
</feature>
<feature type="repeat" description="15">
    <location>
        <begin position="1005"/>
        <end position="1006"/>
    </location>
</feature>
<feature type="repeat" description="16">
    <location>
        <begin position="1007"/>
        <end position="1008"/>
    </location>
</feature>
<feature type="repeat" description="17">
    <location>
        <begin position="1009"/>
        <end position="1010"/>
    </location>
</feature>
<feature type="repeat" description="18">
    <location>
        <begin position="1011"/>
        <end position="1012"/>
    </location>
</feature>
<feature type="repeat" description="19">
    <location>
        <begin position="1013"/>
        <end position="1014"/>
    </location>
</feature>
<feature type="repeat" description="20">
    <location>
        <begin position="1015"/>
        <end position="1016"/>
    </location>
</feature>
<feature type="repeat" description="21">
    <location>
        <begin position="1017"/>
        <end position="1018"/>
    </location>
</feature>
<feature type="domain" description="Tyrosine-protein phosphatase" evidence="4">
    <location>
        <begin position="1248"/>
        <end position="1508"/>
    </location>
</feature>
<feature type="region of interest" description="Disordered" evidence="7">
    <location>
        <begin position="711"/>
        <end position="788"/>
    </location>
</feature>
<feature type="region of interest" description="His">
    <location>
        <begin position="773"/>
        <end position="1186"/>
    </location>
</feature>
<feature type="region of interest" description="Disordered" evidence="7">
    <location>
        <begin position="884"/>
        <end position="923"/>
    </location>
</feature>
<feature type="region of interest" description="Disordered" evidence="7">
    <location>
        <begin position="944"/>
        <end position="1199"/>
    </location>
</feature>
<feature type="region of interest" description="21 X 2 AA approximate tandem repeats of P-Q">
    <location>
        <begin position="977"/>
        <end position="1018"/>
    </location>
</feature>
<feature type="region of interest" description="Disordered" evidence="7">
    <location>
        <begin position="1574"/>
        <end position="1638"/>
    </location>
</feature>
<feature type="coiled-coil region" evidence="3">
    <location>
        <begin position="552"/>
        <end position="639"/>
    </location>
</feature>
<feature type="compositionally biased region" description="Low complexity" evidence="7">
    <location>
        <begin position="774"/>
        <end position="785"/>
    </location>
</feature>
<feature type="compositionally biased region" description="Polar residues" evidence="7">
    <location>
        <begin position="884"/>
        <end position="894"/>
    </location>
</feature>
<feature type="compositionally biased region" description="Pro residues" evidence="7">
    <location>
        <begin position="897"/>
        <end position="923"/>
    </location>
</feature>
<feature type="compositionally biased region" description="Pro residues" evidence="7">
    <location>
        <begin position="984"/>
        <end position="1002"/>
    </location>
</feature>
<feature type="compositionally biased region" description="Pro residues" evidence="7">
    <location>
        <begin position="1093"/>
        <end position="1102"/>
    </location>
</feature>
<feature type="compositionally biased region" description="Pro residues" evidence="7">
    <location>
        <begin position="1127"/>
        <end position="1165"/>
    </location>
</feature>
<feature type="compositionally biased region" description="Pro residues" evidence="7">
    <location>
        <begin position="1598"/>
        <end position="1612"/>
    </location>
</feature>
<feature type="compositionally biased region" description="Low complexity" evidence="7">
    <location>
        <begin position="1620"/>
        <end position="1638"/>
    </location>
</feature>
<feature type="active site" description="Phosphocysteine intermediate" evidence="4 6">
    <location>
        <position position="1448"/>
    </location>
</feature>
<feature type="modified residue" description="Phosphothreonine" evidence="10">
    <location>
        <position position="744"/>
    </location>
</feature>
<feature type="modified residue" description="Omega-N-methylarginine" evidence="2">
    <location>
        <position position="974"/>
    </location>
</feature>
<feature type="modified residue" description="Phosphoserine" evidence="2">
    <location>
        <position position="1178"/>
    </location>
</feature>
<feature type="modified residue" description="Phosphoserine" evidence="2">
    <location>
        <position position="1179"/>
    </location>
</feature>
<feature type="modified residue" description="Phosphothreonine" evidence="2">
    <location>
        <position position="1187"/>
    </location>
</feature>
<feature type="modified residue" description="Omega-N-methylarginine" evidence="2">
    <location>
        <position position="1671"/>
    </location>
</feature>
<feature type="splice variant" id="VSP_014195" description="In isoform 2." evidence="8">
    <location>
        <begin position="1352"/>
        <end position="1353"/>
    </location>
</feature>
<feature type="sequence conflict" description="In Ref. 3; AAH06582." evidence="9" ref="3">
    <location>
        <begin position="1353"/>
        <end position="1354"/>
    </location>
</feature>
<reference key="1">
    <citation type="journal article" date="2005" name="Science">
        <title>The transcriptional landscape of the mammalian genome.</title>
        <authorList>
            <person name="Carninci P."/>
            <person name="Kasukawa T."/>
            <person name="Katayama S."/>
            <person name="Gough J."/>
            <person name="Frith M.C."/>
            <person name="Maeda N."/>
            <person name="Oyama R."/>
            <person name="Ravasi T."/>
            <person name="Lenhard B."/>
            <person name="Wells C."/>
            <person name="Kodzius R."/>
            <person name="Shimokawa K."/>
            <person name="Bajic V.B."/>
            <person name="Brenner S.E."/>
            <person name="Batalov S."/>
            <person name="Forrest A.R."/>
            <person name="Zavolan M."/>
            <person name="Davis M.J."/>
            <person name="Wilming L.G."/>
            <person name="Aidinis V."/>
            <person name="Allen J.E."/>
            <person name="Ambesi-Impiombato A."/>
            <person name="Apweiler R."/>
            <person name="Aturaliya R.N."/>
            <person name="Bailey T.L."/>
            <person name="Bansal M."/>
            <person name="Baxter L."/>
            <person name="Beisel K.W."/>
            <person name="Bersano T."/>
            <person name="Bono H."/>
            <person name="Chalk A.M."/>
            <person name="Chiu K.P."/>
            <person name="Choudhary V."/>
            <person name="Christoffels A."/>
            <person name="Clutterbuck D.R."/>
            <person name="Crowe M.L."/>
            <person name="Dalla E."/>
            <person name="Dalrymple B.P."/>
            <person name="de Bono B."/>
            <person name="Della Gatta G."/>
            <person name="di Bernardo D."/>
            <person name="Down T."/>
            <person name="Engstrom P."/>
            <person name="Fagiolini M."/>
            <person name="Faulkner G."/>
            <person name="Fletcher C.F."/>
            <person name="Fukushima T."/>
            <person name="Furuno M."/>
            <person name="Futaki S."/>
            <person name="Gariboldi M."/>
            <person name="Georgii-Hemming P."/>
            <person name="Gingeras T.R."/>
            <person name="Gojobori T."/>
            <person name="Green R.E."/>
            <person name="Gustincich S."/>
            <person name="Harbers M."/>
            <person name="Hayashi Y."/>
            <person name="Hensch T.K."/>
            <person name="Hirokawa N."/>
            <person name="Hill D."/>
            <person name="Huminiecki L."/>
            <person name="Iacono M."/>
            <person name="Ikeo K."/>
            <person name="Iwama A."/>
            <person name="Ishikawa T."/>
            <person name="Jakt M."/>
            <person name="Kanapin A."/>
            <person name="Katoh M."/>
            <person name="Kawasawa Y."/>
            <person name="Kelso J."/>
            <person name="Kitamura H."/>
            <person name="Kitano H."/>
            <person name="Kollias G."/>
            <person name="Krishnan S.P."/>
            <person name="Kruger A."/>
            <person name="Kummerfeld S.K."/>
            <person name="Kurochkin I.V."/>
            <person name="Lareau L.F."/>
            <person name="Lazarevic D."/>
            <person name="Lipovich L."/>
            <person name="Liu J."/>
            <person name="Liuni S."/>
            <person name="McWilliam S."/>
            <person name="Madan Babu M."/>
            <person name="Madera M."/>
            <person name="Marchionni L."/>
            <person name="Matsuda H."/>
            <person name="Matsuzawa S."/>
            <person name="Miki H."/>
            <person name="Mignone F."/>
            <person name="Miyake S."/>
            <person name="Morris K."/>
            <person name="Mottagui-Tabar S."/>
            <person name="Mulder N."/>
            <person name="Nakano N."/>
            <person name="Nakauchi H."/>
            <person name="Ng P."/>
            <person name="Nilsson R."/>
            <person name="Nishiguchi S."/>
            <person name="Nishikawa S."/>
            <person name="Nori F."/>
            <person name="Ohara O."/>
            <person name="Okazaki Y."/>
            <person name="Orlando V."/>
            <person name="Pang K.C."/>
            <person name="Pavan W.J."/>
            <person name="Pavesi G."/>
            <person name="Pesole G."/>
            <person name="Petrovsky N."/>
            <person name="Piazza S."/>
            <person name="Reed J."/>
            <person name="Reid J.F."/>
            <person name="Ring B.Z."/>
            <person name="Ringwald M."/>
            <person name="Rost B."/>
            <person name="Ruan Y."/>
            <person name="Salzberg S.L."/>
            <person name="Sandelin A."/>
            <person name="Schneider C."/>
            <person name="Schoenbach C."/>
            <person name="Sekiguchi K."/>
            <person name="Semple C.A."/>
            <person name="Seno S."/>
            <person name="Sessa L."/>
            <person name="Sheng Y."/>
            <person name="Shibata Y."/>
            <person name="Shimada H."/>
            <person name="Shimada K."/>
            <person name="Silva D."/>
            <person name="Sinclair B."/>
            <person name="Sperling S."/>
            <person name="Stupka E."/>
            <person name="Sugiura K."/>
            <person name="Sultana R."/>
            <person name="Takenaka Y."/>
            <person name="Taki K."/>
            <person name="Tammoja K."/>
            <person name="Tan S.L."/>
            <person name="Tang S."/>
            <person name="Taylor M.S."/>
            <person name="Tegner J."/>
            <person name="Teichmann S.A."/>
            <person name="Ueda H.R."/>
            <person name="van Nimwegen E."/>
            <person name="Verardo R."/>
            <person name="Wei C.L."/>
            <person name="Yagi K."/>
            <person name="Yamanishi H."/>
            <person name="Zabarovsky E."/>
            <person name="Zhu S."/>
            <person name="Zimmer A."/>
            <person name="Hide W."/>
            <person name="Bult C."/>
            <person name="Grimmond S.M."/>
            <person name="Teasdale R.D."/>
            <person name="Liu E.T."/>
            <person name="Brusic V."/>
            <person name="Quackenbush J."/>
            <person name="Wahlestedt C."/>
            <person name="Mattick J.S."/>
            <person name="Hume D.A."/>
            <person name="Kai C."/>
            <person name="Sasaki D."/>
            <person name="Tomaru Y."/>
            <person name="Fukuda S."/>
            <person name="Kanamori-Katayama M."/>
            <person name="Suzuki M."/>
            <person name="Aoki J."/>
            <person name="Arakawa T."/>
            <person name="Iida J."/>
            <person name="Imamura K."/>
            <person name="Itoh M."/>
            <person name="Kato T."/>
            <person name="Kawaji H."/>
            <person name="Kawagashira N."/>
            <person name="Kawashima T."/>
            <person name="Kojima M."/>
            <person name="Kondo S."/>
            <person name="Konno H."/>
            <person name="Nakano K."/>
            <person name="Ninomiya N."/>
            <person name="Nishio T."/>
            <person name="Okada M."/>
            <person name="Plessy C."/>
            <person name="Shibata K."/>
            <person name="Shiraki T."/>
            <person name="Suzuki S."/>
            <person name="Tagami M."/>
            <person name="Waki K."/>
            <person name="Watahiki A."/>
            <person name="Okamura-Oho Y."/>
            <person name="Suzuki H."/>
            <person name="Kawai J."/>
            <person name="Hayashizaki Y."/>
        </authorList>
    </citation>
    <scope>NUCLEOTIDE SEQUENCE [LARGE SCALE MRNA] OF 1-193</scope>
    <source>
        <tissue>Dendritic cell</tissue>
    </source>
</reference>
<reference key="2">
    <citation type="submission" date="2004-01" db="EMBL/GenBank/DDBJ databases">
        <authorList>
            <consortium name="The MGC Project Team"/>
        </authorList>
    </citation>
    <scope>NUCLEOTIDE SEQUENCE [LARGE SCALE MRNA] OF 137-438</scope>
    <source>
        <tissue>Fetal brain</tissue>
        <tissue>Fetal eye</tissue>
    </source>
</reference>
<reference key="3">
    <citation type="journal article" date="2004" name="Genome Res.">
        <title>The status, quality, and expansion of the NIH full-length cDNA project: the Mammalian Gene Collection (MGC).</title>
        <authorList>
            <consortium name="The MGC Project Team"/>
        </authorList>
    </citation>
    <scope>NUCLEOTIDE SEQUENCE [LARGE SCALE MRNA] OF 394-1692 (ISOFORM 1)</scope>
    <scope>NUCLEOTIDE SEQUENCE [LARGE SCALE MRNA] OF 1183-1692 (ISOFORM 2)</scope>
    <source>
        <strain>C57BL/6J</strain>
        <tissue>Brain</tissue>
        <tissue>Eye</tissue>
        <tissue>Mammary tumor</tissue>
    </source>
</reference>
<reference key="4">
    <citation type="journal article" date="2004" name="DNA Res.">
        <title>Prediction of the coding sequences of mouse homologues of KIAA gene: IV. The complete nucleotide sequences of 500 mouse KIAA-homologous cDNAs identified by screening of terminal sequences of cDNA clones randomly sampled from size-fractionated libraries.</title>
        <authorList>
            <person name="Okazaki N."/>
            <person name="Kikuno R."/>
            <person name="Ohara R."/>
            <person name="Inamoto S."/>
            <person name="Koseki H."/>
            <person name="Hiraoka S."/>
            <person name="Saga Y."/>
            <person name="Seino S."/>
            <person name="Nishimura M."/>
            <person name="Kaisho T."/>
            <person name="Hoshino K."/>
            <person name="Kitamura H."/>
            <person name="Nagase T."/>
            <person name="Ohara O."/>
            <person name="Koga H."/>
        </authorList>
    </citation>
    <scope>NUCLEOTIDE SEQUENCE [LARGE SCALE MRNA] OF 712-1439</scope>
    <source>
        <tissue>Thymus</tissue>
    </source>
</reference>
<reference key="5">
    <citation type="journal article" date="2007" name="Proc. Natl. Acad. Sci. U.S.A.">
        <title>Large-scale phosphorylation analysis of mouse liver.</title>
        <authorList>
            <person name="Villen J."/>
            <person name="Beausoleil S.A."/>
            <person name="Gerber S.A."/>
            <person name="Gygi S.P."/>
        </authorList>
    </citation>
    <scope>IDENTIFICATION BY MASS SPECTROMETRY [LARGE SCALE ANALYSIS]</scope>
    <source>
        <tissue>Liver</tissue>
    </source>
</reference>
<reference key="6">
    <citation type="journal article" date="2010" name="Cell">
        <title>A tissue-specific atlas of mouse protein phosphorylation and expression.</title>
        <authorList>
            <person name="Huttlin E.L."/>
            <person name="Jedrychowski M.P."/>
            <person name="Elias J.E."/>
            <person name="Goswami T."/>
            <person name="Rad R."/>
            <person name="Beausoleil S.A."/>
            <person name="Villen J."/>
            <person name="Haas W."/>
            <person name="Sowa M.E."/>
            <person name="Gygi S.P."/>
        </authorList>
    </citation>
    <scope>PHOSPHORYLATION [LARGE SCALE ANALYSIS] AT THR-744</scope>
    <scope>IDENTIFICATION BY MASS SPECTROMETRY [LARGE SCALE ANALYSIS]</scope>
    <source>
        <tissue>Brain</tissue>
        <tissue>Brown adipose tissue</tissue>
        <tissue>Heart</tissue>
        <tissue>Kidney</tissue>
        <tissue>Liver</tissue>
        <tissue>Lung</tissue>
        <tissue>Pancreas</tissue>
        <tissue>Spleen</tissue>
        <tissue>Testis</tissue>
    </source>
</reference>
<evidence type="ECO:0000250" key="1"/>
<evidence type="ECO:0000250" key="2">
    <source>
        <dbReference type="UniProtKB" id="Q9H3S7"/>
    </source>
</evidence>
<evidence type="ECO:0000255" key="3"/>
<evidence type="ECO:0000255" key="4">
    <source>
        <dbReference type="PROSITE-ProRule" id="PRU00160"/>
    </source>
</evidence>
<evidence type="ECO:0000255" key="5">
    <source>
        <dbReference type="PROSITE-ProRule" id="PRU00526"/>
    </source>
</evidence>
<evidence type="ECO:0000255" key="6">
    <source>
        <dbReference type="PROSITE-ProRule" id="PRU10044"/>
    </source>
</evidence>
<evidence type="ECO:0000256" key="7">
    <source>
        <dbReference type="SAM" id="MobiDB-lite"/>
    </source>
</evidence>
<evidence type="ECO:0000303" key="8">
    <source>
    </source>
</evidence>
<evidence type="ECO:0000305" key="9"/>
<evidence type="ECO:0007744" key="10">
    <source>
    </source>
</evidence>
<gene>
    <name type="primary">Ptpn23</name>
    <name type="synonym">Kiaa1471</name>
</gene>
<dbReference type="EC" id="3.1.3.48"/>
<dbReference type="EMBL" id="BY750106">
    <property type="status" value="NOT_ANNOTATED_CDS"/>
    <property type="molecule type" value="mRNA"/>
</dbReference>
<dbReference type="EMBL" id="CF734421">
    <property type="status" value="NOT_ANNOTATED_CDS"/>
    <property type="molecule type" value="mRNA"/>
</dbReference>
<dbReference type="EMBL" id="CB248963">
    <property type="status" value="NOT_ANNOTATED_CDS"/>
    <property type="molecule type" value="mRNA"/>
</dbReference>
<dbReference type="EMBL" id="BC006582">
    <property type="protein sequence ID" value="AAH06582.1"/>
    <property type="molecule type" value="mRNA"/>
</dbReference>
<dbReference type="EMBL" id="BC022721">
    <property type="protein sequence ID" value="AAH22721.1"/>
    <property type="molecule type" value="mRNA"/>
</dbReference>
<dbReference type="EMBL" id="BC059902">
    <property type="protein sequence ID" value="AAH59902.1"/>
    <property type="molecule type" value="mRNA"/>
</dbReference>
<dbReference type="EMBL" id="AK173178">
    <property type="protein sequence ID" value="BAD32456.1"/>
    <property type="status" value="ALT_INIT"/>
    <property type="molecule type" value="mRNA"/>
</dbReference>
<dbReference type="CCDS" id="CCDS40780.1">
    <molecule id="Q6PB44-1"/>
</dbReference>
<dbReference type="RefSeq" id="NP_001074512.1">
    <molecule id="Q6PB44-1"/>
    <property type="nucleotide sequence ID" value="NM_001081043.1"/>
</dbReference>
<dbReference type="PDB" id="2W10">
    <property type="method" value="X-ray"/>
    <property type="resolution" value="1.90 A"/>
    <property type="chains" value="C/D=719-730"/>
</dbReference>
<dbReference type="PDBsum" id="2W10"/>
<dbReference type="SMR" id="Q6PB44"/>
<dbReference type="BioGRID" id="222711">
    <property type="interactions" value="54"/>
</dbReference>
<dbReference type="DIP" id="DIP-48351N"/>
<dbReference type="FunCoup" id="Q6PB44">
    <property type="interactions" value="3911"/>
</dbReference>
<dbReference type="IntAct" id="Q6PB44">
    <property type="interactions" value="45"/>
</dbReference>
<dbReference type="MINT" id="Q6PB44"/>
<dbReference type="STRING" id="10090.ENSMUSP00000039580"/>
<dbReference type="GlyGen" id="Q6PB44">
    <property type="glycosylation" value="18 sites, 1 O-linked glycan (11 sites)"/>
</dbReference>
<dbReference type="iPTMnet" id="Q6PB44"/>
<dbReference type="PhosphoSitePlus" id="Q6PB44"/>
<dbReference type="SwissPalm" id="Q6PB44"/>
<dbReference type="jPOST" id="Q6PB44"/>
<dbReference type="PaxDb" id="10090-ENSMUSP00000039580"/>
<dbReference type="PeptideAtlas" id="Q6PB44"/>
<dbReference type="ProteomicsDB" id="301939">
    <molecule id="Q6PB44-1"/>
</dbReference>
<dbReference type="ProteomicsDB" id="301940">
    <molecule id="Q6PB44-2"/>
</dbReference>
<dbReference type="Pumba" id="Q6PB44"/>
<dbReference type="Antibodypedia" id="12918">
    <property type="antibodies" value="145 antibodies from 25 providers"/>
</dbReference>
<dbReference type="DNASU" id="104831"/>
<dbReference type="Ensembl" id="ENSMUST00000040021.12">
    <molecule id="Q6PB44-1"/>
    <property type="protein sequence ID" value="ENSMUSP00000039580.8"/>
    <property type="gene ID" value="ENSMUSG00000036057.12"/>
</dbReference>
<dbReference type="GeneID" id="104831"/>
<dbReference type="KEGG" id="mmu:104831"/>
<dbReference type="UCSC" id="uc009rty.1">
    <molecule id="Q6PB44-1"/>
    <property type="organism name" value="mouse"/>
</dbReference>
<dbReference type="UCSC" id="uc012hbi.1">
    <molecule id="Q6PB44-2"/>
    <property type="organism name" value="mouse"/>
</dbReference>
<dbReference type="AGR" id="MGI:2144837"/>
<dbReference type="CTD" id="25930"/>
<dbReference type="MGI" id="MGI:2144837">
    <property type="gene designation" value="Ptpn23"/>
</dbReference>
<dbReference type="VEuPathDB" id="HostDB:ENSMUSG00000036057"/>
<dbReference type="eggNOG" id="KOG0789">
    <property type="taxonomic scope" value="Eukaryota"/>
</dbReference>
<dbReference type="eggNOG" id="KOG2220">
    <property type="taxonomic scope" value="Eukaryota"/>
</dbReference>
<dbReference type="GeneTree" id="ENSGT00940000157687"/>
<dbReference type="HOGENOM" id="CLU_001129_0_0_1"/>
<dbReference type="InParanoid" id="Q6PB44"/>
<dbReference type="OMA" id="HQRPLHM"/>
<dbReference type="OrthoDB" id="10266451at2759"/>
<dbReference type="PhylomeDB" id="Q6PB44"/>
<dbReference type="TreeFam" id="TF323502"/>
<dbReference type="BioGRID-ORCS" id="104831">
    <property type="hits" value="12 hits in 79 CRISPR screens"/>
</dbReference>
<dbReference type="ChiTaRS" id="Ptpn23">
    <property type="organism name" value="mouse"/>
</dbReference>
<dbReference type="EvolutionaryTrace" id="Q6PB44"/>
<dbReference type="PRO" id="PR:Q6PB44"/>
<dbReference type="Proteomes" id="UP000000589">
    <property type="component" value="Chromosome 9"/>
</dbReference>
<dbReference type="RNAct" id="Q6PB44">
    <property type="molecule type" value="protein"/>
</dbReference>
<dbReference type="Bgee" id="ENSMUSG00000036057">
    <property type="expression patterns" value="Expressed in internal carotid artery and 161 other cell types or tissues"/>
</dbReference>
<dbReference type="ExpressionAtlas" id="Q6PB44">
    <property type="expression patterns" value="baseline and differential"/>
</dbReference>
<dbReference type="GO" id="GO:0034451">
    <property type="term" value="C:centriolar satellite"/>
    <property type="evidence" value="ECO:0007669"/>
    <property type="project" value="Ensembl"/>
</dbReference>
<dbReference type="GO" id="GO:0036064">
    <property type="term" value="C:ciliary basal body"/>
    <property type="evidence" value="ECO:0000250"/>
    <property type="project" value="UniProtKB"/>
</dbReference>
<dbReference type="GO" id="GO:0005737">
    <property type="term" value="C:cytoplasm"/>
    <property type="evidence" value="ECO:0000250"/>
    <property type="project" value="UniProtKB"/>
</dbReference>
<dbReference type="GO" id="GO:0005829">
    <property type="term" value="C:cytosol"/>
    <property type="evidence" value="ECO:0007669"/>
    <property type="project" value="Ensembl"/>
</dbReference>
<dbReference type="GO" id="GO:0005769">
    <property type="term" value="C:early endosome"/>
    <property type="evidence" value="ECO:0000250"/>
    <property type="project" value="UniProtKB"/>
</dbReference>
<dbReference type="GO" id="GO:0005768">
    <property type="term" value="C:endosome"/>
    <property type="evidence" value="ECO:0000250"/>
    <property type="project" value="UniProtKB"/>
</dbReference>
<dbReference type="GO" id="GO:0016604">
    <property type="term" value="C:nuclear body"/>
    <property type="evidence" value="ECO:0007669"/>
    <property type="project" value="Ensembl"/>
</dbReference>
<dbReference type="GO" id="GO:0005634">
    <property type="term" value="C:nucleus"/>
    <property type="evidence" value="ECO:0000250"/>
    <property type="project" value="UniProtKB"/>
</dbReference>
<dbReference type="GO" id="GO:0019901">
    <property type="term" value="F:protein kinase binding"/>
    <property type="evidence" value="ECO:0007669"/>
    <property type="project" value="Ensembl"/>
</dbReference>
<dbReference type="GO" id="GO:0004725">
    <property type="term" value="F:protein tyrosine phosphatase activity"/>
    <property type="evidence" value="ECO:0007669"/>
    <property type="project" value="UniProtKB-EC"/>
</dbReference>
<dbReference type="GO" id="GO:0060271">
    <property type="term" value="P:cilium assembly"/>
    <property type="evidence" value="ECO:0000250"/>
    <property type="project" value="UniProtKB"/>
</dbReference>
<dbReference type="GO" id="GO:0045022">
    <property type="term" value="P:early endosome to late endosome transport"/>
    <property type="evidence" value="ECO:0007669"/>
    <property type="project" value="Ensembl"/>
</dbReference>
<dbReference type="GO" id="GO:0032456">
    <property type="term" value="P:endocytic recycling"/>
    <property type="evidence" value="ECO:0007669"/>
    <property type="project" value="Ensembl"/>
</dbReference>
<dbReference type="GO" id="GO:0010633">
    <property type="term" value="P:negative regulation of epithelial cell migration"/>
    <property type="evidence" value="ECO:0007669"/>
    <property type="project" value="Ensembl"/>
</dbReference>
<dbReference type="GO" id="GO:1903393">
    <property type="term" value="P:positive regulation of adherens junction organization"/>
    <property type="evidence" value="ECO:0007669"/>
    <property type="project" value="Ensembl"/>
</dbReference>
<dbReference type="GO" id="GO:2000643">
    <property type="term" value="P:positive regulation of early endosome to late endosome transport"/>
    <property type="evidence" value="ECO:0007669"/>
    <property type="project" value="Ensembl"/>
</dbReference>
<dbReference type="GO" id="GO:1903387">
    <property type="term" value="P:positive regulation of homophilic cell adhesion"/>
    <property type="evidence" value="ECO:0007669"/>
    <property type="project" value="Ensembl"/>
</dbReference>
<dbReference type="GO" id="GO:0061357">
    <property type="term" value="P:positive regulation of Wnt protein secretion"/>
    <property type="evidence" value="ECO:0007669"/>
    <property type="project" value="Ensembl"/>
</dbReference>
<dbReference type="GO" id="GO:0015031">
    <property type="term" value="P:protein transport"/>
    <property type="evidence" value="ECO:0007669"/>
    <property type="project" value="UniProtKB-KW"/>
</dbReference>
<dbReference type="GO" id="GO:0043162">
    <property type="term" value="P:ubiquitin-dependent protein catabolic process via the multivesicular body sorting pathway"/>
    <property type="evidence" value="ECO:0000250"/>
    <property type="project" value="UniProtKB"/>
</dbReference>
<dbReference type="CDD" id="cd09239">
    <property type="entry name" value="BRO1_HD-PTP_like"/>
    <property type="match status" value="1"/>
</dbReference>
<dbReference type="CDD" id="cd14539">
    <property type="entry name" value="PTP-N23"/>
    <property type="match status" value="1"/>
</dbReference>
<dbReference type="CDD" id="cd09234">
    <property type="entry name" value="V_HD-PTP_like"/>
    <property type="match status" value="1"/>
</dbReference>
<dbReference type="FunFam" id="1.25.40.280:FF:000002">
    <property type="entry name" value="Tyrosine-protein phosphatase non-receptor type 23"/>
    <property type="match status" value="1"/>
</dbReference>
<dbReference type="FunFam" id="3.90.190.10:FF:000061">
    <property type="entry name" value="tyrosine-protein phosphatase non-receptor type 23 isoform X1"/>
    <property type="match status" value="1"/>
</dbReference>
<dbReference type="Gene3D" id="1.20.120.560">
    <property type="entry name" value="alix/aip1 in complex with the ypdl late domain"/>
    <property type="match status" value="1"/>
</dbReference>
<dbReference type="Gene3D" id="1.20.140.50">
    <property type="entry name" value="alix/aip1 like domains"/>
    <property type="match status" value="1"/>
</dbReference>
<dbReference type="Gene3D" id="1.25.40.280">
    <property type="entry name" value="alix/aip1 like domains"/>
    <property type="match status" value="1"/>
</dbReference>
<dbReference type="Gene3D" id="3.90.190.10">
    <property type="entry name" value="Protein tyrosine phosphatase superfamily"/>
    <property type="match status" value="1"/>
</dbReference>
<dbReference type="IDEAL" id="IID50093"/>
<dbReference type="InterPro" id="IPR025304">
    <property type="entry name" value="ALIX_V_dom"/>
</dbReference>
<dbReference type="InterPro" id="IPR004328">
    <property type="entry name" value="BRO1_dom"/>
</dbReference>
<dbReference type="InterPro" id="IPR038499">
    <property type="entry name" value="BRO1_sf"/>
</dbReference>
<dbReference type="InterPro" id="IPR029021">
    <property type="entry name" value="Prot-tyrosine_phosphatase-like"/>
</dbReference>
<dbReference type="InterPro" id="IPR000242">
    <property type="entry name" value="PTP_cat"/>
</dbReference>
<dbReference type="InterPro" id="IPR016130">
    <property type="entry name" value="Tyr_Pase_AS"/>
</dbReference>
<dbReference type="InterPro" id="IPR003595">
    <property type="entry name" value="Tyr_Pase_cat"/>
</dbReference>
<dbReference type="InterPro" id="IPR000387">
    <property type="entry name" value="Tyr_Pase_dom"/>
</dbReference>
<dbReference type="PANTHER" id="PTHR23030">
    <property type="entry name" value="PCD6 INTERACTING PROTEIN-RELATED"/>
    <property type="match status" value="1"/>
</dbReference>
<dbReference type="PANTHER" id="PTHR23030:SF30">
    <property type="entry name" value="TYROSINE-PROTEIN PHOSPHATASE NON-RECEPTOR TYPE 23"/>
    <property type="match status" value="1"/>
</dbReference>
<dbReference type="Pfam" id="PF13949">
    <property type="entry name" value="ALIX_LYPXL_bnd"/>
    <property type="match status" value="1"/>
</dbReference>
<dbReference type="Pfam" id="PF03097">
    <property type="entry name" value="BRO1"/>
    <property type="match status" value="1"/>
</dbReference>
<dbReference type="Pfam" id="PF00102">
    <property type="entry name" value="Y_phosphatase"/>
    <property type="match status" value="1"/>
</dbReference>
<dbReference type="PRINTS" id="PR00700">
    <property type="entry name" value="PRTYPHPHTASE"/>
</dbReference>
<dbReference type="SMART" id="SM01041">
    <property type="entry name" value="BRO1"/>
    <property type="match status" value="1"/>
</dbReference>
<dbReference type="SMART" id="SM00194">
    <property type="entry name" value="PTPc"/>
    <property type="match status" value="1"/>
</dbReference>
<dbReference type="SMART" id="SM00404">
    <property type="entry name" value="PTPc_motif"/>
    <property type="match status" value="1"/>
</dbReference>
<dbReference type="SUPFAM" id="SSF52799">
    <property type="entry name" value="(Phosphotyrosine protein) phosphatases II"/>
    <property type="match status" value="1"/>
</dbReference>
<dbReference type="PROSITE" id="PS51180">
    <property type="entry name" value="BRO1"/>
    <property type="match status" value="1"/>
</dbReference>
<dbReference type="PROSITE" id="PS00383">
    <property type="entry name" value="TYR_PHOSPHATASE_1"/>
    <property type="match status" value="1"/>
</dbReference>
<dbReference type="PROSITE" id="PS50056">
    <property type="entry name" value="TYR_PHOSPHATASE_2"/>
    <property type="match status" value="1"/>
</dbReference>
<dbReference type="PROSITE" id="PS50055">
    <property type="entry name" value="TYR_PHOSPHATASE_PTP"/>
    <property type="match status" value="1"/>
</dbReference>
<proteinExistence type="evidence at protein level"/>
<organism>
    <name type="scientific">Mus musculus</name>
    <name type="common">Mouse</name>
    <dbReference type="NCBI Taxonomy" id="10090"/>
    <lineage>
        <taxon>Eukaryota</taxon>
        <taxon>Metazoa</taxon>
        <taxon>Chordata</taxon>
        <taxon>Craniata</taxon>
        <taxon>Vertebrata</taxon>
        <taxon>Euteleostomi</taxon>
        <taxon>Mammalia</taxon>
        <taxon>Eutheria</taxon>
        <taxon>Euarchontoglires</taxon>
        <taxon>Glires</taxon>
        <taxon>Rodentia</taxon>
        <taxon>Myomorpha</taxon>
        <taxon>Muroidea</taxon>
        <taxon>Muridae</taxon>
        <taxon>Murinae</taxon>
        <taxon>Mus</taxon>
        <taxon>Mus</taxon>
    </lineage>
</organism>